<reference key="1">
    <citation type="journal article" date="1993" name="Plant Physiol.">
        <title>Cotton Lea5 and Lea14 encode atypical late embryogenesis-abundant proteins.</title>
        <authorList>
            <person name="Galau G.A."/>
            <person name="Wang H.Y.-C."/>
            <person name="Hughes D.W."/>
        </authorList>
    </citation>
    <scope>NUCLEOTIDE SEQUENCE [GENOMIC DNA / MRNA]</scope>
    <source>
        <strain>cv. Coker 201</strain>
        <tissue>Cotyledon</tissue>
    </source>
</reference>
<evidence type="ECO:0000305" key="1"/>
<comment type="induction">
    <text>By water stress; in leaves.</text>
</comment>
<comment type="similarity">
    <text evidence="1">Belongs to the LEA type 3 family.</text>
</comment>
<gene>
    <name type="primary">LEA5-A</name>
</gene>
<name>LEA5A_GOSHI</name>
<dbReference type="EMBL" id="M88324">
    <property type="protein sequence ID" value="AAA18545.1"/>
    <property type="molecule type" value="mRNA"/>
</dbReference>
<dbReference type="EMBL" id="M37697">
    <property type="protein sequence ID" value="AAA18538.1"/>
    <property type="molecule type" value="Genomic_DNA"/>
</dbReference>
<dbReference type="PIR" id="T09874">
    <property type="entry name" value="T09874"/>
</dbReference>
<dbReference type="RefSeq" id="XP_016677413.1">
    <property type="nucleotide sequence ID" value="XM_016821924.1"/>
</dbReference>
<dbReference type="STRING" id="3635.P46521"/>
<dbReference type="PaxDb" id="3635-P46521"/>
<dbReference type="KEGG" id="ghi:107896693"/>
<dbReference type="OMA" id="AVSNMMR"/>
<dbReference type="Proteomes" id="UP000189702">
    <property type="component" value="Chromosome 16"/>
</dbReference>
<dbReference type="GO" id="GO:0006950">
    <property type="term" value="P:response to stress"/>
    <property type="evidence" value="ECO:0000318"/>
    <property type="project" value="GO_Central"/>
</dbReference>
<dbReference type="InterPro" id="IPR004926">
    <property type="entry name" value="LEA_3a"/>
</dbReference>
<dbReference type="PANTHER" id="PTHR33509">
    <property type="entry name" value="LATE EMBRYOGENIS ABUNDANT PROTEIN 2-RELATED"/>
    <property type="match status" value="1"/>
</dbReference>
<dbReference type="PANTHER" id="PTHR33509:SF34">
    <property type="entry name" value="LATE EMBRYOGENIS ABUNDANT PROTEIN 41"/>
    <property type="match status" value="1"/>
</dbReference>
<dbReference type="Pfam" id="PF03242">
    <property type="entry name" value="LEA_3a"/>
    <property type="match status" value="1"/>
</dbReference>
<feature type="chain" id="PRO_0000221238" description="Late embryogenesis abundant protein Lea5-A">
    <location>
        <begin position="1"/>
        <end position="105"/>
    </location>
</feature>
<organism>
    <name type="scientific">Gossypium hirsutum</name>
    <name type="common">Upland cotton</name>
    <name type="synonym">Gossypium mexicanum</name>
    <dbReference type="NCBI Taxonomy" id="3635"/>
    <lineage>
        <taxon>Eukaryota</taxon>
        <taxon>Viridiplantae</taxon>
        <taxon>Streptophyta</taxon>
        <taxon>Embryophyta</taxon>
        <taxon>Tracheophyta</taxon>
        <taxon>Spermatophyta</taxon>
        <taxon>Magnoliopsida</taxon>
        <taxon>eudicotyledons</taxon>
        <taxon>Gunneridae</taxon>
        <taxon>Pentapetalae</taxon>
        <taxon>rosids</taxon>
        <taxon>malvids</taxon>
        <taxon>Malvales</taxon>
        <taxon>Malvaceae</taxon>
        <taxon>Malvoideae</taxon>
        <taxon>Gossypium</taxon>
    </lineage>
</organism>
<sequence>MARSVSSFKFLGASVFDALYVSISRRGYSGAPPAAVTASFGRPGAMGKVERRYAMKESSSSETRAYSSAWAPDPVTGYYRPENCGAEIDAADLREMMLNHRVRSQ</sequence>
<keyword id="KW-1185">Reference proteome</keyword>
<keyword id="KW-0346">Stress response</keyword>
<accession>P46521</accession>
<protein>
    <recommendedName>
        <fullName>Late embryogenesis abundant protein Lea5-A</fullName>
    </recommendedName>
</protein>
<proteinExistence type="evidence at transcript level"/>